<comment type="function">
    <text evidence="1">One of the primary rRNA binding proteins, it binds directly near the 3'-end of the 23S rRNA, where it nucleates assembly of the 50S subunit.</text>
</comment>
<comment type="subunit">
    <text evidence="1">Part of the 50S ribosomal subunit. Forms a cluster with proteins L14 and L19.</text>
</comment>
<comment type="PTM">
    <text evidence="1">Methylated by PrmB.</text>
</comment>
<comment type="similarity">
    <text evidence="1">Belongs to the universal ribosomal protein uL3 family.</text>
</comment>
<keyword id="KW-0488">Methylation</keyword>
<keyword id="KW-1185">Reference proteome</keyword>
<keyword id="KW-0687">Ribonucleoprotein</keyword>
<keyword id="KW-0689">Ribosomal protein</keyword>
<keyword id="KW-0694">RNA-binding</keyword>
<keyword id="KW-0699">rRNA-binding</keyword>
<accession>B7J467</accession>
<dbReference type="EMBL" id="CP001219">
    <property type="protein sequence ID" value="ACK79182.1"/>
    <property type="molecule type" value="Genomic_DNA"/>
</dbReference>
<dbReference type="RefSeq" id="WP_009565431.1">
    <property type="nucleotide sequence ID" value="NC_011761.1"/>
</dbReference>
<dbReference type="SMR" id="B7J467"/>
<dbReference type="STRING" id="243159.AFE_0327"/>
<dbReference type="PaxDb" id="243159-AFE_0327"/>
<dbReference type="GeneID" id="65279706"/>
<dbReference type="KEGG" id="afr:AFE_0327"/>
<dbReference type="eggNOG" id="COG0087">
    <property type="taxonomic scope" value="Bacteria"/>
</dbReference>
<dbReference type="HOGENOM" id="CLU_044142_4_1_6"/>
<dbReference type="Proteomes" id="UP000001362">
    <property type="component" value="Chromosome"/>
</dbReference>
<dbReference type="GO" id="GO:0022625">
    <property type="term" value="C:cytosolic large ribosomal subunit"/>
    <property type="evidence" value="ECO:0007669"/>
    <property type="project" value="TreeGrafter"/>
</dbReference>
<dbReference type="GO" id="GO:0019843">
    <property type="term" value="F:rRNA binding"/>
    <property type="evidence" value="ECO:0007669"/>
    <property type="project" value="UniProtKB-UniRule"/>
</dbReference>
<dbReference type="GO" id="GO:0003735">
    <property type="term" value="F:structural constituent of ribosome"/>
    <property type="evidence" value="ECO:0007669"/>
    <property type="project" value="InterPro"/>
</dbReference>
<dbReference type="GO" id="GO:0006412">
    <property type="term" value="P:translation"/>
    <property type="evidence" value="ECO:0007669"/>
    <property type="project" value="UniProtKB-UniRule"/>
</dbReference>
<dbReference type="FunFam" id="2.40.30.10:FF:000004">
    <property type="entry name" value="50S ribosomal protein L3"/>
    <property type="match status" value="1"/>
</dbReference>
<dbReference type="FunFam" id="3.30.160.810:FF:000001">
    <property type="entry name" value="50S ribosomal protein L3"/>
    <property type="match status" value="1"/>
</dbReference>
<dbReference type="Gene3D" id="3.30.160.810">
    <property type="match status" value="1"/>
</dbReference>
<dbReference type="Gene3D" id="2.40.30.10">
    <property type="entry name" value="Translation factors"/>
    <property type="match status" value="1"/>
</dbReference>
<dbReference type="HAMAP" id="MF_01325_B">
    <property type="entry name" value="Ribosomal_uL3_B"/>
    <property type="match status" value="1"/>
</dbReference>
<dbReference type="InterPro" id="IPR000597">
    <property type="entry name" value="Ribosomal_uL3"/>
</dbReference>
<dbReference type="InterPro" id="IPR019927">
    <property type="entry name" value="Ribosomal_uL3_bac/org-type"/>
</dbReference>
<dbReference type="InterPro" id="IPR019926">
    <property type="entry name" value="Ribosomal_uL3_CS"/>
</dbReference>
<dbReference type="InterPro" id="IPR009000">
    <property type="entry name" value="Transl_B-barrel_sf"/>
</dbReference>
<dbReference type="NCBIfam" id="TIGR03625">
    <property type="entry name" value="L3_bact"/>
    <property type="match status" value="1"/>
</dbReference>
<dbReference type="PANTHER" id="PTHR11229">
    <property type="entry name" value="50S RIBOSOMAL PROTEIN L3"/>
    <property type="match status" value="1"/>
</dbReference>
<dbReference type="PANTHER" id="PTHR11229:SF16">
    <property type="entry name" value="LARGE RIBOSOMAL SUBUNIT PROTEIN UL3C"/>
    <property type="match status" value="1"/>
</dbReference>
<dbReference type="Pfam" id="PF00297">
    <property type="entry name" value="Ribosomal_L3"/>
    <property type="match status" value="1"/>
</dbReference>
<dbReference type="SUPFAM" id="SSF50447">
    <property type="entry name" value="Translation proteins"/>
    <property type="match status" value="1"/>
</dbReference>
<dbReference type="PROSITE" id="PS00474">
    <property type="entry name" value="RIBOSOMAL_L3"/>
    <property type="match status" value="1"/>
</dbReference>
<proteinExistence type="inferred from homology"/>
<feature type="chain" id="PRO_1000141812" description="Large ribosomal subunit protein uL3">
    <location>
        <begin position="1"/>
        <end position="210"/>
    </location>
</feature>
<feature type="region of interest" description="Disordered" evidence="2">
    <location>
        <begin position="131"/>
        <end position="150"/>
    </location>
</feature>
<feature type="compositionally biased region" description="Polar residues" evidence="2">
    <location>
        <begin position="131"/>
        <end position="140"/>
    </location>
</feature>
<feature type="modified residue" description="N5-methylglutamine" evidence="1">
    <location>
        <position position="151"/>
    </location>
</feature>
<protein>
    <recommendedName>
        <fullName evidence="1">Large ribosomal subunit protein uL3</fullName>
    </recommendedName>
    <alternativeName>
        <fullName evidence="3">50S ribosomal protein L3</fullName>
    </alternativeName>
</protein>
<organism>
    <name type="scientific">Acidithiobacillus ferrooxidans (strain ATCC 23270 / DSM 14882 / CIP 104768 / NCIMB 8455)</name>
    <name type="common">Ferrobacillus ferrooxidans (strain ATCC 23270)</name>
    <dbReference type="NCBI Taxonomy" id="243159"/>
    <lineage>
        <taxon>Bacteria</taxon>
        <taxon>Pseudomonadati</taxon>
        <taxon>Pseudomonadota</taxon>
        <taxon>Acidithiobacillia</taxon>
        <taxon>Acidithiobacillales</taxon>
        <taxon>Acidithiobacillaceae</taxon>
        <taxon>Acidithiobacillus</taxon>
    </lineage>
</organism>
<sequence length="210" mass="22387">MVMGLIGRKVGMTRIVAGDGRVLPVTVIHVAPNTVAQVKDIATDGYCAVQVATGTRRPQRVTSALAGHFRKNGIAPGRLLREFRVADTANYACGMDIDLDIFAEGQRVDVSGVSKGKGFAGAIKRHNFRSNRASHGNSLSHRAPGSIGCRQTPGRVFKGKKMAGHLGAEQVTTLNLELVRIDANRRLLMIKGAVPGARDGDVMIRPAVRG</sequence>
<name>RL3_ACIF2</name>
<reference key="1">
    <citation type="journal article" date="2008" name="BMC Genomics">
        <title>Acidithiobacillus ferrooxidans metabolism: from genome sequence to industrial applications.</title>
        <authorList>
            <person name="Valdes J."/>
            <person name="Pedroso I."/>
            <person name="Quatrini R."/>
            <person name="Dodson R.J."/>
            <person name="Tettelin H."/>
            <person name="Blake R. II"/>
            <person name="Eisen J.A."/>
            <person name="Holmes D.S."/>
        </authorList>
    </citation>
    <scope>NUCLEOTIDE SEQUENCE [LARGE SCALE GENOMIC DNA]</scope>
    <source>
        <strain>ATCC 23270 / DSM 14882 / CIP 104768 / NCIMB 8455</strain>
    </source>
</reference>
<evidence type="ECO:0000255" key="1">
    <source>
        <dbReference type="HAMAP-Rule" id="MF_01325"/>
    </source>
</evidence>
<evidence type="ECO:0000256" key="2">
    <source>
        <dbReference type="SAM" id="MobiDB-lite"/>
    </source>
</evidence>
<evidence type="ECO:0000305" key="3"/>
<gene>
    <name evidence="1" type="primary">rplC</name>
    <name type="ordered locus">AFE_0327</name>
</gene>